<protein>
    <recommendedName>
        <fullName evidence="1">Membrane protein insertase YidC 2</fullName>
    </recommendedName>
    <alternativeName>
        <fullName evidence="1">Foldase YidC 2</fullName>
    </alternativeName>
    <alternativeName>
        <fullName evidence="1">Membrane integrase YidC 2</fullName>
    </alternativeName>
    <alternativeName>
        <fullName evidence="1">Membrane protein YidC 2</fullName>
    </alternativeName>
</protein>
<sequence>MKKKLGLLAMVVALMAITAGCSEVNQPITPKSTGIWNEYFVYPLSQLITYFANLFGSNYGLAIVVTTLIIRFALLPLMIKQTKSTKAMQALQPEMVKLKEKYSSKDQATQQKLQQEMMQLYQKNGVNPLAGCLPIFVQMPILFAFYHAIMRTSEISKHTFLWFDLGQADPYYILPVVAAITTFIQQKLAMAGTAGQNPQMAMMLWLMPIMILIFAINFPAALSLYWVVGNIFGIAQMYLIKGPEIKASKAGGSSK</sequence>
<organism>
    <name type="scientific">Bacillus anthracis</name>
    <dbReference type="NCBI Taxonomy" id="1392"/>
    <lineage>
        <taxon>Bacteria</taxon>
        <taxon>Bacillati</taxon>
        <taxon>Bacillota</taxon>
        <taxon>Bacilli</taxon>
        <taxon>Bacillales</taxon>
        <taxon>Bacillaceae</taxon>
        <taxon>Bacillus</taxon>
        <taxon>Bacillus cereus group</taxon>
    </lineage>
</organism>
<accession>Q81JH1</accession>
<accession>Q6HQ12</accession>
<accession>Q6KJF7</accession>
<keyword id="KW-1003">Cell membrane</keyword>
<keyword id="KW-0143">Chaperone</keyword>
<keyword id="KW-0449">Lipoprotein</keyword>
<keyword id="KW-0472">Membrane</keyword>
<keyword id="KW-0564">Palmitate</keyword>
<keyword id="KW-0653">Protein transport</keyword>
<keyword id="KW-1185">Reference proteome</keyword>
<keyword id="KW-0732">Signal</keyword>
<keyword id="KW-0812">Transmembrane</keyword>
<keyword id="KW-1133">Transmembrane helix</keyword>
<keyword id="KW-0813">Transport</keyword>
<proteinExistence type="inferred from homology"/>
<dbReference type="EMBL" id="AE016879">
    <property type="protein sequence ID" value="AAP29367.1"/>
    <property type="molecule type" value="Genomic_DNA"/>
</dbReference>
<dbReference type="EMBL" id="AE017334">
    <property type="protein sequence ID" value="AAT34897.2"/>
    <property type="molecule type" value="Genomic_DNA"/>
</dbReference>
<dbReference type="EMBL" id="AE017225">
    <property type="protein sequence ID" value="AAT57626.1"/>
    <property type="molecule type" value="Genomic_DNA"/>
</dbReference>
<dbReference type="RefSeq" id="NP_847881.1">
    <property type="nucleotide sequence ID" value="NC_003997.3"/>
</dbReference>
<dbReference type="RefSeq" id="YP_031576.1">
    <property type="nucleotide sequence ID" value="NC_005945.1"/>
</dbReference>
<dbReference type="SMR" id="Q81JH1"/>
<dbReference type="STRING" id="261594.GBAA_5736"/>
<dbReference type="DNASU" id="1085508"/>
<dbReference type="GeneID" id="45025314"/>
<dbReference type="KEGG" id="ban:BA_5736"/>
<dbReference type="KEGG" id="bar:GBAA_5736"/>
<dbReference type="KEGG" id="bat:BAS5339"/>
<dbReference type="PATRIC" id="fig|198094.11.peg.5697"/>
<dbReference type="eggNOG" id="COG0706">
    <property type="taxonomic scope" value="Bacteria"/>
</dbReference>
<dbReference type="HOGENOM" id="CLU_036138_5_0_9"/>
<dbReference type="OMA" id="ATFVQQK"/>
<dbReference type="OrthoDB" id="9780552at2"/>
<dbReference type="Proteomes" id="UP000000427">
    <property type="component" value="Chromosome"/>
</dbReference>
<dbReference type="Proteomes" id="UP000000594">
    <property type="component" value="Chromosome"/>
</dbReference>
<dbReference type="GO" id="GO:0005886">
    <property type="term" value="C:plasma membrane"/>
    <property type="evidence" value="ECO:0007669"/>
    <property type="project" value="UniProtKB-SubCell"/>
</dbReference>
<dbReference type="GO" id="GO:0032977">
    <property type="term" value="F:membrane insertase activity"/>
    <property type="evidence" value="ECO:0007669"/>
    <property type="project" value="InterPro"/>
</dbReference>
<dbReference type="GO" id="GO:0051205">
    <property type="term" value="P:protein insertion into membrane"/>
    <property type="evidence" value="ECO:0007669"/>
    <property type="project" value="TreeGrafter"/>
</dbReference>
<dbReference type="GO" id="GO:0015031">
    <property type="term" value="P:protein transport"/>
    <property type="evidence" value="ECO:0007669"/>
    <property type="project" value="UniProtKB-KW"/>
</dbReference>
<dbReference type="CDD" id="cd20070">
    <property type="entry name" value="5TM_YidC_Alb3"/>
    <property type="match status" value="1"/>
</dbReference>
<dbReference type="HAMAP" id="MF_01811">
    <property type="entry name" value="YidC_type2"/>
    <property type="match status" value="1"/>
</dbReference>
<dbReference type="InterPro" id="IPR001708">
    <property type="entry name" value="YidC/ALB3/OXA1/COX18"/>
</dbReference>
<dbReference type="InterPro" id="IPR028055">
    <property type="entry name" value="YidC/Oxa/ALB_C"/>
</dbReference>
<dbReference type="InterPro" id="IPR023060">
    <property type="entry name" value="YidC/YidC1/YidC2_Firmicutes"/>
</dbReference>
<dbReference type="InterPro" id="IPR047196">
    <property type="entry name" value="YidC_ALB_C"/>
</dbReference>
<dbReference type="NCBIfam" id="NF002803">
    <property type="entry name" value="PRK02944.1"/>
    <property type="match status" value="1"/>
</dbReference>
<dbReference type="NCBIfam" id="TIGR03592">
    <property type="entry name" value="yidC_oxa1_cterm"/>
    <property type="match status" value="1"/>
</dbReference>
<dbReference type="PANTHER" id="PTHR12428:SF65">
    <property type="entry name" value="CYTOCHROME C OXIDASE ASSEMBLY PROTEIN COX18, MITOCHONDRIAL"/>
    <property type="match status" value="1"/>
</dbReference>
<dbReference type="PANTHER" id="PTHR12428">
    <property type="entry name" value="OXA1"/>
    <property type="match status" value="1"/>
</dbReference>
<dbReference type="Pfam" id="PF02096">
    <property type="entry name" value="60KD_IMP"/>
    <property type="match status" value="1"/>
</dbReference>
<dbReference type="PRINTS" id="PR00701">
    <property type="entry name" value="60KDINNERMP"/>
</dbReference>
<dbReference type="PRINTS" id="PR01900">
    <property type="entry name" value="YIDCPROTEIN"/>
</dbReference>
<dbReference type="PROSITE" id="PS51257">
    <property type="entry name" value="PROKAR_LIPOPROTEIN"/>
    <property type="match status" value="1"/>
</dbReference>
<comment type="function">
    <text evidence="1">Required for the insertion and/or proper folding and/or complex formation of integral membrane proteins into the membrane. Involved in integration of membrane proteins that insert both dependently and independently of the Sec translocase complex, as well as at least some lipoproteins.</text>
</comment>
<comment type="subcellular location">
    <subcellularLocation>
        <location evidence="1">Cell membrane</location>
        <topology evidence="1">Multi-pass membrane protein</topology>
    </subcellularLocation>
</comment>
<comment type="similarity">
    <text evidence="1">Belongs to the OXA1/ALB3/YidC family. Type 2 subfamily.</text>
</comment>
<evidence type="ECO:0000255" key="1">
    <source>
        <dbReference type="HAMAP-Rule" id="MF_01811"/>
    </source>
</evidence>
<gene>
    <name evidence="1" type="primary">yidC2</name>
    <name type="synonym">spoIIIJ-2</name>
    <name type="ordered locus">BA_5736</name>
    <name type="ordered locus">GBAA_5736</name>
    <name type="ordered locus">BAS5339</name>
</gene>
<reference key="1">
    <citation type="journal article" date="2003" name="Nature">
        <title>The genome sequence of Bacillus anthracis Ames and comparison to closely related bacteria.</title>
        <authorList>
            <person name="Read T.D."/>
            <person name="Peterson S.N."/>
            <person name="Tourasse N.J."/>
            <person name="Baillie L.W."/>
            <person name="Paulsen I.T."/>
            <person name="Nelson K.E."/>
            <person name="Tettelin H."/>
            <person name="Fouts D.E."/>
            <person name="Eisen J.A."/>
            <person name="Gill S.R."/>
            <person name="Holtzapple E.K."/>
            <person name="Okstad O.A."/>
            <person name="Helgason E."/>
            <person name="Rilstone J."/>
            <person name="Wu M."/>
            <person name="Kolonay J.F."/>
            <person name="Beanan M.J."/>
            <person name="Dodson R.J."/>
            <person name="Brinkac L.M."/>
            <person name="Gwinn M.L."/>
            <person name="DeBoy R.T."/>
            <person name="Madpu R."/>
            <person name="Daugherty S.C."/>
            <person name="Durkin A.S."/>
            <person name="Haft D.H."/>
            <person name="Nelson W.C."/>
            <person name="Peterson J.D."/>
            <person name="Pop M."/>
            <person name="Khouri H.M."/>
            <person name="Radune D."/>
            <person name="Benton J.L."/>
            <person name="Mahamoud Y."/>
            <person name="Jiang L."/>
            <person name="Hance I.R."/>
            <person name="Weidman J.F."/>
            <person name="Berry K.J."/>
            <person name="Plaut R.D."/>
            <person name="Wolf A.M."/>
            <person name="Watkins K.L."/>
            <person name="Nierman W.C."/>
            <person name="Hazen A."/>
            <person name="Cline R.T."/>
            <person name="Redmond C."/>
            <person name="Thwaite J.E."/>
            <person name="White O."/>
            <person name="Salzberg S.L."/>
            <person name="Thomason B."/>
            <person name="Friedlander A.M."/>
            <person name="Koehler T.M."/>
            <person name="Hanna P.C."/>
            <person name="Kolstoe A.-B."/>
            <person name="Fraser C.M."/>
        </authorList>
    </citation>
    <scope>NUCLEOTIDE SEQUENCE [LARGE SCALE GENOMIC DNA]</scope>
    <source>
        <strain>Ames / isolate Porton</strain>
    </source>
</reference>
<reference key="2">
    <citation type="journal article" date="2009" name="J. Bacteriol.">
        <title>The complete genome sequence of Bacillus anthracis Ames 'Ancestor'.</title>
        <authorList>
            <person name="Ravel J."/>
            <person name="Jiang L."/>
            <person name="Stanley S.T."/>
            <person name="Wilson M.R."/>
            <person name="Decker R.S."/>
            <person name="Read T.D."/>
            <person name="Worsham P."/>
            <person name="Keim P.S."/>
            <person name="Salzberg S.L."/>
            <person name="Fraser-Liggett C.M."/>
            <person name="Rasko D.A."/>
        </authorList>
    </citation>
    <scope>NUCLEOTIDE SEQUENCE [LARGE SCALE GENOMIC DNA]</scope>
    <source>
        <strain>Ames ancestor</strain>
    </source>
</reference>
<reference key="3">
    <citation type="submission" date="2004-01" db="EMBL/GenBank/DDBJ databases">
        <title>Complete genome sequence of Bacillus anthracis Sterne.</title>
        <authorList>
            <person name="Brettin T.S."/>
            <person name="Bruce D."/>
            <person name="Challacombe J.F."/>
            <person name="Gilna P."/>
            <person name="Han C."/>
            <person name="Hill K."/>
            <person name="Hitchcock P."/>
            <person name="Jackson P."/>
            <person name="Keim P."/>
            <person name="Longmire J."/>
            <person name="Lucas S."/>
            <person name="Okinaka R."/>
            <person name="Richardson P."/>
            <person name="Rubin E."/>
            <person name="Tice H."/>
        </authorList>
    </citation>
    <scope>NUCLEOTIDE SEQUENCE [LARGE SCALE GENOMIC DNA]</scope>
    <source>
        <strain>Sterne</strain>
    </source>
</reference>
<name>YIDC2_BACAN</name>
<feature type="signal peptide" evidence="1">
    <location>
        <begin position="1"/>
        <end position="20"/>
    </location>
</feature>
<feature type="chain" id="PRO_0000020371" description="Membrane protein insertase YidC 2">
    <location>
        <begin position="21"/>
        <end position="255"/>
    </location>
</feature>
<feature type="transmembrane region" description="Helical" evidence="1">
    <location>
        <begin position="59"/>
        <end position="79"/>
    </location>
</feature>
<feature type="transmembrane region" description="Helical" evidence="1">
    <location>
        <begin position="129"/>
        <end position="149"/>
    </location>
</feature>
<feature type="transmembrane region" description="Helical" evidence="1">
    <location>
        <begin position="160"/>
        <end position="180"/>
    </location>
</feature>
<feature type="transmembrane region" description="Helical" evidence="1">
    <location>
        <begin position="202"/>
        <end position="222"/>
    </location>
</feature>
<feature type="transmembrane region" description="Helical" evidence="1">
    <location>
        <begin position="223"/>
        <end position="243"/>
    </location>
</feature>
<feature type="lipid moiety-binding region" description="N-palmitoyl cysteine" evidence="1">
    <location>
        <position position="21"/>
    </location>
</feature>
<feature type="lipid moiety-binding region" description="S-diacylglycerol cysteine" evidence="1">
    <location>
        <position position="21"/>
    </location>
</feature>